<gene>
    <name evidence="1" type="primary">gatB</name>
    <name type="ordered locus">CTC_02392</name>
</gene>
<sequence>MDFESVIGLEVHAELSTKTKIYCGCTTEFGGKPNTHVCPVCLGLPGSLPQLNKKVVDYAIKAGLALNCEINKSSRLDRKNYFYPDCPKNYQITQDELPICKNGYIEIELENGEKKRVGIERIHIEEDAGKLLHTKAGTLVDFNRAGVPLIEIVSRPDMSSPEEASQYLQKLRSILASIEVSDCKMEEGSLRCDANISVKPKGDTKLGVRAEIKNMNSFKSLEKAVAYETKRHIELIQKGEKLQQETRRWDEANNITIAMRSKEAANDYRYFPEGDSVAITINDKYIDEIRATIPELPHEKAERFVEEFKIPKYDASVLTLTMEMANFFEETAKLSGDAKASSNWLMGDISRLLNEQNMAVEELKFNPTQLSELIKLISSGTISNNIGKKVVEEMFNTGKSPKVIVEEKGLVQNNDEGAILEVVKRIIDENPQSIEDYRNGKNRVLGFLVGLVMKETRGKANPQIVNKLINEEVNKLA</sequence>
<proteinExistence type="inferred from homology"/>
<keyword id="KW-0067">ATP-binding</keyword>
<keyword id="KW-0436">Ligase</keyword>
<keyword id="KW-0547">Nucleotide-binding</keyword>
<keyword id="KW-0648">Protein biosynthesis</keyword>
<keyword id="KW-1185">Reference proteome</keyword>
<name>GATB_CLOTE</name>
<reference key="1">
    <citation type="journal article" date="2003" name="Proc. Natl. Acad. Sci. U.S.A.">
        <title>The genome sequence of Clostridium tetani, the causative agent of tetanus disease.</title>
        <authorList>
            <person name="Brueggemann H."/>
            <person name="Baeumer S."/>
            <person name="Fricke W.F."/>
            <person name="Wiezer A."/>
            <person name="Liesegang H."/>
            <person name="Decker I."/>
            <person name="Herzberg C."/>
            <person name="Martinez-Arias R."/>
            <person name="Merkl R."/>
            <person name="Henne A."/>
            <person name="Gottschalk G."/>
        </authorList>
    </citation>
    <scope>NUCLEOTIDE SEQUENCE [LARGE SCALE GENOMIC DNA]</scope>
    <source>
        <strain>Massachusetts / E88</strain>
    </source>
</reference>
<dbReference type="EC" id="6.3.5.-" evidence="1"/>
<dbReference type="EMBL" id="AE015927">
    <property type="protein sequence ID" value="AAO36863.1"/>
    <property type="molecule type" value="Genomic_DNA"/>
</dbReference>
<dbReference type="RefSeq" id="WP_011100524.1">
    <property type="nucleotide sequence ID" value="NC_004557.1"/>
</dbReference>
<dbReference type="SMR" id="Q891I2"/>
<dbReference type="STRING" id="212717.CTC_02392"/>
<dbReference type="GeneID" id="24252818"/>
<dbReference type="KEGG" id="ctc:CTC_02392"/>
<dbReference type="HOGENOM" id="CLU_019240_0_0_9"/>
<dbReference type="OrthoDB" id="9804078at2"/>
<dbReference type="Proteomes" id="UP000001412">
    <property type="component" value="Chromosome"/>
</dbReference>
<dbReference type="GO" id="GO:0050566">
    <property type="term" value="F:asparaginyl-tRNA synthase (glutamine-hydrolyzing) activity"/>
    <property type="evidence" value="ECO:0007669"/>
    <property type="project" value="RHEA"/>
</dbReference>
<dbReference type="GO" id="GO:0005524">
    <property type="term" value="F:ATP binding"/>
    <property type="evidence" value="ECO:0007669"/>
    <property type="project" value="UniProtKB-KW"/>
</dbReference>
<dbReference type="GO" id="GO:0050567">
    <property type="term" value="F:glutaminyl-tRNA synthase (glutamine-hydrolyzing) activity"/>
    <property type="evidence" value="ECO:0007669"/>
    <property type="project" value="UniProtKB-UniRule"/>
</dbReference>
<dbReference type="GO" id="GO:0070681">
    <property type="term" value="P:glutaminyl-tRNAGln biosynthesis via transamidation"/>
    <property type="evidence" value="ECO:0007669"/>
    <property type="project" value="TreeGrafter"/>
</dbReference>
<dbReference type="GO" id="GO:0006412">
    <property type="term" value="P:translation"/>
    <property type="evidence" value="ECO:0007669"/>
    <property type="project" value="UniProtKB-UniRule"/>
</dbReference>
<dbReference type="FunFam" id="1.10.10.410:FF:000001">
    <property type="entry name" value="Aspartyl/glutamyl-tRNA(Asn/Gln) amidotransferase subunit B"/>
    <property type="match status" value="1"/>
</dbReference>
<dbReference type="FunFam" id="1.10.150.380:FF:000001">
    <property type="entry name" value="Aspartyl/glutamyl-tRNA(Asn/Gln) amidotransferase subunit B"/>
    <property type="match status" value="1"/>
</dbReference>
<dbReference type="Gene3D" id="1.10.10.410">
    <property type="match status" value="1"/>
</dbReference>
<dbReference type="Gene3D" id="1.10.150.380">
    <property type="entry name" value="GatB domain, N-terminal subdomain"/>
    <property type="match status" value="1"/>
</dbReference>
<dbReference type="HAMAP" id="MF_00121">
    <property type="entry name" value="GatB"/>
    <property type="match status" value="1"/>
</dbReference>
<dbReference type="InterPro" id="IPR017959">
    <property type="entry name" value="Asn/Gln-tRNA_amidoTrfase_suB/E"/>
</dbReference>
<dbReference type="InterPro" id="IPR006075">
    <property type="entry name" value="Asn/Gln-tRNA_Trfase_suB/E_cat"/>
</dbReference>
<dbReference type="InterPro" id="IPR018027">
    <property type="entry name" value="Asn/Gln_amidotransferase"/>
</dbReference>
<dbReference type="InterPro" id="IPR003789">
    <property type="entry name" value="Asn/Gln_tRNA_amidoTrase-B-like"/>
</dbReference>
<dbReference type="InterPro" id="IPR004413">
    <property type="entry name" value="GatB"/>
</dbReference>
<dbReference type="InterPro" id="IPR042114">
    <property type="entry name" value="GatB_C_1"/>
</dbReference>
<dbReference type="InterPro" id="IPR023168">
    <property type="entry name" value="GatB_Yqey_C_2"/>
</dbReference>
<dbReference type="InterPro" id="IPR017958">
    <property type="entry name" value="Gln-tRNA_amidoTrfase_suB_CS"/>
</dbReference>
<dbReference type="InterPro" id="IPR014746">
    <property type="entry name" value="Gln_synth/guanido_kin_cat_dom"/>
</dbReference>
<dbReference type="NCBIfam" id="TIGR00133">
    <property type="entry name" value="gatB"/>
    <property type="match status" value="1"/>
</dbReference>
<dbReference type="NCBIfam" id="NF004012">
    <property type="entry name" value="PRK05477.1-2"/>
    <property type="match status" value="1"/>
</dbReference>
<dbReference type="NCBIfam" id="NF004014">
    <property type="entry name" value="PRK05477.1-4"/>
    <property type="match status" value="1"/>
</dbReference>
<dbReference type="PANTHER" id="PTHR11659">
    <property type="entry name" value="GLUTAMYL-TRNA GLN AMIDOTRANSFERASE SUBUNIT B MITOCHONDRIAL AND PROKARYOTIC PET112-RELATED"/>
    <property type="match status" value="1"/>
</dbReference>
<dbReference type="PANTHER" id="PTHR11659:SF0">
    <property type="entry name" value="GLUTAMYL-TRNA(GLN) AMIDOTRANSFERASE SUBUNIT B, MITOCHONDRIAL"/>
    <property type="match status" value="1"/>
</dbReference>
<dbReference type="Pfam" id="PF02934">
    <property type="entry name" value="GatB_N"/>
    <property type="match status" value="1"/>
</dbReference>
<dbReference type="Pfam" id="PF02637">
    <property type="entry name" value="GatB_Yqey"/>
    <property type="match status" value="1"/>
</dbReference>
<dbReference type="SMART" id="SM00845">
    <property type="entry name" value="GatB_Yqey"/>
    <property type="match status" value="1"/>
</dbReference>
<dbReference type="SUPFAM" id="SSF89095">
    <property type="entry name" value="GatB/YqeY motif"/>
    <property type="match status" value="1"/>
</dbReference>
<dbReference type="SUPFAM" id="SSF55931">
    <property type="entry name" value="Glutamine synthetase/guanido kinase"/>
    <property type="match status" value="1"/>
</dbReference>
<dbReference type="PROSITE" id="PS01234">
    <property type="entry name" value="GATB"/>
    <property type="match status" value="1"/>
</dbReference>
<organism>
    <name type="scientific">Clostridium tetani (strain Massachusetts / E88)</name>
    <dbReference type="NCBI Taxonomy" id="212717"/>
    <lineage>
        <taxon>Bacteria</taxon>
        <taxon>Bacillati</taxon>
        <taxon>Bacillota</taxon>
        <taxon>Clostridia</taxon>
        <taxon>Eubacteriales</taxon>
        <taxon>Clostridiaceae</taxon>
        <taxon>Clostridium</taxon>
    </lineage>
</organism>
<feature type="chain" id="PRO_0000148783" description="Aspartyl/glutamyl-tRNA(Asn/Gln) amidotransferase subunit B">
    <location>
        <begin position="1"/>
        <end position="477"/>
    </location>
</feature>
<protein>
    <recommendedName>
        <fullName evidence="1">Aspartyl/glutamyl-tRNA(Asn/Gln) amidotransferase subunit B</fullName>
        <shortName evidence="1">Asp/Glu-ADT subunit B</shortName>
        <ecNumber evidence="1">6.3.5.-</ecNumber>
    </recommendedName>
</protein>
<comment type="function">
    <text evidence="1">Allows the formation of correctly charged Asn-tRNA(Asn) or Gln-tRNA(Gln) through the transamidation of misacylated Asp-tRNA(Asn) or Glu-tRNA(Gln) in organisms which lack either or both of asparaginyl-tRNA or glutaminyl-tRNA synthetases. The reaction takes place in the presence of glutamine and ATP through an activated phospho-Asp-tRNA(Asn) or phospho-Glu-tRNA(Gln).</text>
</comment>
<comment type="catalytic activity">
    <reaction evidence="1">
        <text>L-glutamyl-tRNA(Gln) + L-glutamine + ATP + H2O = L-glutaminyl-tRNA(Gln) + L-glutamate + ADP + phosphate + H(+)</text>
        <dbReference type="Rhea" id="RHEA:17521"/>
        <dbReference type="Rhea" id="RHEA-COMP:9681"/>
        <dbReference type="Rhea" id="RHEA-COMP:9684"/>
        <dbReference type="ChEBI" id="CHEBI:15377"/>
        <dbReference type="ChEBI" id="CHEBI:15378"/>
        <dbReference type="ChEBI" id="CHEBI:29985"/>
        <dbReference type="ChEBI" id="CHEBI:30616"/>
        <dbReference type="ChEBI" id="CHEBI:43474"/>
        <dbReference type="ChEBI" id="CHEBI:58359"/>
        <dbReference type="ChEBI" id="CHEBI:78520"/>
        <dbReference type="ChEBI" id="CHEBI:78521"/>
        <dbReference type="ChEBI" id="CHEBI:456216"/>
    </reaction>
</comment>
<comment type="catalytic activity">
    <reaction evidence="1">
        <text>L-aspartyl-tRNA(Asn) + L-glutamine + ATP + H2O = L-asparaginyl-tRNA(Asn) + L-glutamate + ADP + phosphate + 2 H(+)</text>
        <dbReference type="Rhea" id="RHEA:14513"/>
        <dbReference type="Rhea" id="RHEA-COMP:9674"/>
        <dbReference type="Rhea" id="RHEA-COMP:9677"/>
        <dbReference type="ChEBI" id="CHEBI:15377"/>
        <dbReference type="ChEBI" id="CHEBI:15378"/>
        <dbReference type="ChEBI" id="CHEBI:29985"/>
        <dbReference type="ChEBI" id="CHEBI:30616"/>
        <dbReference type="ChEBI" id="CHEBI:43474"/>
        <dbReference type="ChEBI" id="CHEBI:58359"/>
        <dbReference type="ChEBI" id="CHEBI:78515"/>
        <dbReference type="ChEBI" id="CHEBI:78516"/>
        <dbReference type="ChEBI" id="CHEBI:456216"/>
    </reaction>
</comment>
<comment type="subunit">
    <text evidence="1">Heterotrimer of A, B and C subunits.</text>
</comment>
<comment type="similarity">
    <text evidence="1">Belongs to the GatB/GatE family. GatB subfamily.</text>
</comment>
<evidence type="ECO:0000255" key="1">
    <source>
        <dbReference type="HAMAP-Rule" id="MF_00121"/>
    </source>
</evidence>
<accession>Q891I2</accession>